<organism>
    <name type="scientific">Mycolicibacterium smegmatis (strain ATCC 700084 / mc(2)155)</name>
    <name type="common">Mycobacterium smegmatis</name>
    <dbReference type="NCBI Taxonomy" id="246196"/>
    <lineage>
        <taxon>Bacteria</taxon>
        <taxon>Bacillati</taxon>
        <taxon>Actinomycetota</taxon>
        <taxon>Actinomycetes</taxon>
        <taxon>Mycobacteriales</taxon>
        <taxon>Mycobacteriaceae</taxon>
        <taxon>Mycolicibacterium</taxon>
    </lineage>
</organism>
<proteinExistence type="predicted"/>
<comment type="subcellular location">
    <subcellularLocation>
        <location evidence="2">Cytoplasm</location>
    </subcellularLocation>
    <text evidence="2">Localizes at or near the cell pole in (on average) 1 discrete spot that colocalizes with SaeC (PubMed:22233444).</text>
</comment>
<comment type="sequence caution" evidence="4">
    <conflict type="erroneous initiation">
        <sequence resource="EMBL-CDS" id="AFP36538"/>
    </conflict>
    <text>Truncated N-terminus.</text>
</comment>
<keyword id="KW-0963">Cytoplasm</keyword>
<keyword id="KW-1185">Reference proteome</keyword>
<protein>
    <recommendedName>
        <fullName evidence="3">ESX-1 secretion-associated protein EspE</fullName>
    </recommendedName>
</protein>
<gene>
    <name evidence="3" type="primary">espE</name>
    <name type="ordered locus">MSMEG_0055</name>
    <name type="ordered locus">MSMEI_0056</name>
</gene>
<dbReference type="EMBL" id="CP000480">
    <property type="protein sequence ID" value="ABK71412.1"/>
    <property type="molecule type" value="Genomic_DNA"/>
</dbReference>
<dbReference type="EMBL" id="CP001663">
    <property type="protein sequence ID" value="AFP36538.1"/>
    <property type="status" value="ALT_INIT"/>
    <property type="molecule type" value="Genomic_DNA"/>
</dbReference>
<dbReference type="RefSeq" id="WP_011726636.1">
    <property type="nucleotide sequence ID" value="NZ_SIJM01000058.1"/>
</dbReference>
<dbReference type="RefSeq" id="YP_884473.1">
    <property type="nucleotide sequence ID" value="NC_008596.1"/>
</dbReference>
<dbReference type="STRING" id="246196.MSMEG_0055"/>
<dbReference type="PaxDb" id="246196-MSMEI_0056"/>
<dbReference type="KEGG" id="msb:LJ00_00275"/>
<dbReference type="KEGG" id="msg:MSMEI_0056"/>
<dbReference type="KEGG" id="msm:MSMEG_0055"/>
<dbReference type="PATRIC" id="fig|246196.19.peg.53"/>
<dbReference type="eggNOG" id="ENOG503200Z">
    <property type="taxonomic scope" value="Bacteria"/>
</dbReference>
<dbReference type="OrthoDB" id="4718801at2"/>
<dbReference type="Proteomes" id="UP000000757">
    <property type="component" value="Chromosome"/>
</dbReference>
<dbReference type="Proteomes" id="UP000006158">
    <property type="component" value="Chromosome"/>
</dbReference>
<dbReference type="GO" id="GO:0005737">
    <property type="term" value="C:cytoplasm"/>
    <property type="evidence" value="ECO:0007669"/>
    <property type="project" value="UniProtKB-SubCell"/>
</dbReference>
<dbReference type="InterPro" id="IPR043796">
    <property type="entry name" value="ESX-1_EspA/EspE-like"/>
</dbReference>
<dbReference type="Pfam" id="PF18879">
    <property type="entry name" value="EspA_EspE"/>
    <property type="match status" value="1"/>
</dbReference>
<sequence length="525" mass="53068">MGVLSDVADFGKDVIDDRDKWADRFKKVGHFIERNAKGDRLERVAKFGRALGDFSGKFTDFFESNLGKRMVKAARSPILAAGQHVITGMKLTTGVGDPENGRRFGEGADHMSAAGRTLDSAYPTSDWDSAASDAYLSQNNGQVTRAEALVHADQVVAAVLSREAEQIATTREVLDSEADWLGDMSLVTMATGLIPYVGRAAQTAAEIAMVTKAVGASTDQFMMMRDKADENAAEVRDAIGKYEAVAGDADDTTADDTAGDAPESEPTAAEDSSETSKEDGQSRHENPVAAPSGGGGGATSGGGGGAPSSASSAGPAGTPQVPSPPGFGAANTPTDAQPGAAAASDAAGMLGSVMGAMLGPLGGIVGGVVQAAGQALQAATQAGAQAAQLAGQAAAAPDVDRADTDEDTDKDPDAEGDKDSDKRDGEGKEDGTAPRDRESTDAMGADDDDRNAHPQAGSGTDSAGEDDKKPAMTLPPDLQAASALDTGAGSAPVHVGADFEHSQLRTVAAATLDHGIPGSAAARGA</sequence>
<reference key="1">
    <citation type="submission" date="2006-10" db="EMBL/GenBank/DDBJ databases">
        <authorList>
            <person name="Fleischmann R.D."/>
            <person name="Dodson R.J."/>
            <person name="Haft D.H."/>
            <person name="Merkel J.S."/>
            <person name="Nelson W.C."/>
            <person name="Fraser C.M."/>
        </authorList>
    </citation>
    <scope>NUCLEOTIDE SEQUENCE [LARGE SCALE GENOMIC DNA]</scope>
    <source>
        <strain>ATCC 700084 / mc(2)155</strain>
    </source>
</reference>
<reference key="2">
    <citation type="journal article" date="2007" name="Genome Biol.">
        <title>Interrupted coding sequences in Mycobacterium smegmatis: authentic mutations or sequencing errors?</title>
        <authorList>
            <person name="Deshayes C."/>
            <person name="Perrodou E."/>
            <person name="Gallien S."/>
            <person name="Euphrasie D."/>
            <person name="Schaeffer C."/>
            <person name="Van-Dorsselaer A."/>
            <person name="Poch O."/>
            <person name="Lecompte O."/>
            <person name="Reyrat J.-M."/>
        </authorList>
    </citation>
    <scope>NUCLEOTIDE SEQUENCE [LARGE SCALE GENOMIC DNA]</scope>
    <source>
        <strain>ATCC 700084 / mc(2)155</strain>
    </source>
</reference>
<reference key="3">
    <citation type="journal article" date="2009" name="Genome Res.">
        <title>Ortho-proteogenomics: multiple proteomes investigation through orthology and a new MS-based protocol.</title>
        <authorList>
            <person name="Gallien S."/>
            <person name="Perrodou E."/>
            <person name="Carapito C."/>
            <person name="Deshayes C."/>
            <person name="Reyrat J.-M."/>
            <person name="Van Dorsselaer A."/>
            <person name="Poch O."/>
            <person name="Schaeffer C."/>
            <person name="Lecompte O."/>
        </authorList>
    </citation>
    <scope>NUCLEOTIDE SEQUENCE [LARGE SCALE GENOMIC DNA]</scope>
    <source>
        <strain>ATCC 700084 / mc(2)155</strain>
    </source>
</reference>
<reference key="4">
    <citation type="journal article" date="2012" name="Mol. Microbiol.">
        <title>Polar assembly and scaffolding proteins of the virulence-associated ESX-1 secretory apparatus in mycobacteria.</title>
        <authorList>
            <person name="Wirth S.E."/>
            <person name="Krywy J.A."/>
            <person name="Aldridge B.B."/>
            <person name="Fortune S.M."/>
            <person name="Fernandez-Suarez M."/>
            <person name="Gray T.A."/>
            <person name="Derbyshire K.M."/>
        </authorList>
    </citation>
    <scope>SUBCELLULAR LOCATION</scope>
    <source>
        <strain>ATCC 700084 / mc(2)155</strain>
    </source>
</reference>
<evidence type="ECO:0000256" key="1">
    <source>
        <dbReference type="SAM" id="MobiDB-lite"/>
    </source>
</evidence>
<evidence type="ECO:0000269" key="2">
    <source>
    </source>
</evidence>
<evidence type="ECO:0000303" key="3">
    <source>
    </source>
</evidence>
<evidence type="ECO:0000305" key="4"/>
<feature type="chain" id="PRO_0000438361" description="ESX-1 secretion-associated protein EspE">
    <location>
        <begin position="1"/>
        <end position="525"/>
    </location>
</feature>
<feature type="region of interest" description="Disordered" evidence="1">
    <location>
        <begin position="244"/>
        <end position="341"/>
    </location>
</feature>
<feature type="region of interest" description="Disordered" evidence="1">
    <location>
        <begin position="375"/>
        <end position="494"/>
    </location>
</feature>
<feature type="compositionally biased region" description="Acidic residues" evidence="1">
    <location>
        <begin position="248"/>
        <end position="258"/>
    </location>
</feature>
<feature type="compositionally biased region" description="Basic and acidic residues" evidence="1">
    <location>
        <begin position="274"/>
        <end position="286"/>
    </location>
</feature>
<feature type="compositionally biased region" description="Gly residues" evidence="1">
    <location>
        <begin position="292"/>
        <end position="306"/>
    </location>
</feature>
<feature type="compositionally biased region" description="Low complexity" evidence="1">
    <location>
        <begin position="307"/>
        <end position="319"/>
    </location>
</feature>
<feature type="compositionally biased region" description="Low complexity" evidence="1">
    <location>
        <begin position="332"/>
        <end position="341"/>
    </location>
</feature>
<feature type="compositionally biased region" description="Low complexity" evidence="1">
    <location>
        <begin position="375"/>
        <end position="397"/>
    </location>
</feature>
<feature type="compositionally biased region" description="Basic and acidic residues" evidence="1">
    <location>
        <begin position="411"/>
        <end position="440"/>
    </location>
</feature>
<accession>A0QNI5</accession>
<accession>I7FCC6</accession>
<name>ESPE_MYCS2</name>